<gene>
    <name type="ORF">NECHADRAFT_32190</name>
</gene>
<evidence type="ECO:0000255" key="1">
    <source>
        <dbReference type="HAMAP-Rule" id="MF_03159"/>
    </source>
</evidence>
<evidence type="ECO:0000305" key="2"/>
<keyword id="KW-0963">Cytoplasm</keyword>
<keyword id="KW-0413">Isomerase</keyword>
<keyword id="KW-0479">Metal-binding</keyword>
<keyword id="KW-0496">Mitochondrion</keyword>
<keyword id="KW-0520">NAD</keyword>
<keyword id="KW-0521">NADP</keyword>
<keyword id="KW-0547">Nucleotide-binding</keyword>
<keyword id="KW-0630">Potassium</keyword>
<keyword id="KW-1185">Reference proteome</keyword>
<feature type="chain" id="PRO_0000416334" description="NAD(P)H-hydrate epimerase">
    <location>
        <begin position="1"/>
        <end position="236"/>
    </location>
</feature>
<feature type="domain" description="YjeF N-terminal" evidence="1">
    <location>
        <begin position="11"/>
        <end position="217"/>
    </location>
</feature>
<feature type="binding site" evidence="1">
    <location>
        <begin position="61"/>
        <end position="65"/>
    </location>
    <ligand>
        <name>(6S)-NADPHX</name>
        <dbReference type="ChEBI" id="CHEBI:64076"/>
    </ligand>
</feature>
<feature type="binding site" evidence="1">
    <location>
        <position position="62"/>
    </location>
    <ligand>
        <name>K(+)</name>
        <dbReference type="ChEBI" id="CHEBI:29103"/>
    </ligand>
</feature>
<feature type="binding site" evidence="1">
    <location>
        <position position="123"/>
    </location>
    <ligand>
        <name>K(+)</name>
        <dbReference type="ChEBI" id="CHEBI:29103"/>
    </ligand>
</feature>
<feature type="binding site" evidence="1">
    <location>
        <begin position="127"/>
        <end position="133"/>
    </location>
    <ligand>
        <name>(6S)-NADPHX</name>
        <dbReference type="ChEBI" id="CHEBI:64076"/>
    </ligand>
</feature>
<feature type="binding site" evidence="1">
    <location>
        <position position="156"/>
    </location>
    <ligand>
        <name>(6S)-NADPHX</name>
        <dbReference type="ChEBI" id="CHEBI:64076"/>
    </ligand>
</feature>
<feature type="binding site" evidence="1">
    <location>
        <position position="159"/>
    </location>
    <ligand>
        <name>K(+)</name>
        <dbReference type="ChEBI" id="CHEBI:29103"/>
    </ligand>
</feature>
<organism>
    <name type="scientific">Fusarium vanettenii (strain ATCC MYA-4622 / CBS 123669 / FGSC 9596 / NRRL 45880 / 77-13-4)</name>
    <name type="common">Fusarium solani subsp. pisi</name>
    <dbReference type="NCBI Taxonomy" id="660122"/>
    <lineage>
        <taxon>Eukaryota</taxon>
        <taxon>Fungi</taxon>
        <taxon>Dikarya</taxon>
        <taxon>Ascomycota</taxon>
        <taxon>Pezizomycotina</taxon>
        <taxon>Sordariomycetes</taxon>
        <taxon>Hypocreomycetidae</taxon>
        <taxon>Hypocreales</taxon>
        <taxon>Nectriaceae</taxon>
        <taxon>Fusarium</taxon>
        <taxon>Fusarium solani species complex</taxon>
        <taxon>Fusarium vanettenii</taxon>
    </lineage>
</organism>
<accession>C7Z508</accession>
<protein>
    <recommendedName>
        <fullName evidence="1">NAD(P)H-hydrate epimerase</fullName>
        <ecNumber>5.1.99.6</ecNumber>
    </recommendedName>
    <alternativeName>
        <fullName evidence="1">NAD(P)HX epimerase</fullName>
    </alternativeName>
</protein>
<proteinExistence type="inferred from homology"/>
<comment type="function">
    <text evidence="1">Catalyzes the epimerization of the S- and R-forms of NAD(P)HX, a damaged form of NAD(P)H that is a result of enzymatic or heat-dependent hydration. This is a prerequisite for the S-specific NAD(P)H-hydrate dehydratase to allow the repair of both epimers of NAD(P)HX.</text>
</comment>
<comment type="catalytic activity">
    <reaction>
        <text>(6R)-NADHX = (6S)-NADHX</text>
        <dbReference type="Rhea" id="RHEA:32215"/>
        <dbReference type="ChEBI" id="CHEBI:64074"/>
        <dbReference type="ChEBI" id="CHEBI:64075"/>
        <dbReference type="EC" id="5.1.99.6"/>
    </reaction>
</comment>
<comment type="catalytic activity">
    <reaction>
        <text>(6R)-NADPHX = (6S)-NADPHX</text>
        <dbReference type="Rhea" id="RHEA:32227"/>
        <dbReference type="ChEBI" id="CHEBI:64076"/>
        <dbReference type="ChEBI" id="CHEBI:64077"/>
        <dbReference type="EC" id="5.1.99.6"/>
    </reaction>
</comment>
<comment type="cofactor">
    <cofactor evidence="1">
        <name>K(+)</name>
        <dbReference type="ChEBI" id="CHEBI:29103"/>
    </cofactor>
    <text evidence="1">Binds 1 potassium ion per subunit.</text>
</comment>
<comment type="subcellular location">
    <subcellularLocation>
        <location evidence="1">Cytoplasm</location>
    </subcellularLocation>
    <subcellularLocation>
        <location evidence="1">Mitochondrion</location>
    </subcellularLocation>
</comment>
<comment type="similarity">
    <text evidence="1">Belongs to the NnrE/AIBP family.</text>
</comment>
<comment type="sequence caution" evidence="2">
    <conflict type="erroneous gene model prediction">
        <sequence resource="EMBL-CDS" id="EEU40437"/>
    </conflict>
</comment>
<dbReference type="EC" id="5.1.99.6"/>
<dbReference type="EMBL" id="GG698910">
    <property type="protein sequence ID" value="EEU40437.1"/>
    <property type="status" value="ALT_SEQ"/>
    <property type="molecule type" value="Genomic_DNA"/>
</dbReference>
<dbReference type="RefSeq" id="XP_003046150.1">
    <property type="nucleotide sequence ID" value="XM_003046104.1"/>
</dbReference>
<dbReference type="SMR" id="C7Z508"/>
<dbReference type="FunCoup" id="C7Z508">
    <property type="interactions" value="268"/>
</dbReference>
<dbReference type="STRING" id="660122.C7Z508"/>
<dbReference type="GeneID" id="9678537"/>
<dbReference type="KEGG" id="nhe:NECHADRAFT_32190"/>
<dbReference type="VEuPathDB" id="FungiDB:NECHADRAFT_32190"/>
<dbReference type="eggNOG" id="KOG2585">
    <property type="taxonomic scope" value="Eukaryota"/>
</dbReference>
<dbReference type="InParanoid" id="C7Z508"/>
<dbReference type="OrthoDB" id="10064708at2759"/>
<dbReference type="Proteomes" id="UP000005206">
    <property type="component" value="Unassembled WGS sequence"/>
</dbReference>
<dbReference type="GO" id="GO:0005739">
    <property type="term" value="C:mitochondrion"/>
    <property type="evidence" value="ECO:0007669"/>
    <property type="project" value="UniProtKB-SubCell"/>
</dbReference>
<dbReference type="GO" id="GO:0046872">
    <property type="term" value="F:metal ion binding"/>
    <property type="evidence" value="ECO:0007669"/>
    <property type="project" value="UniProtKB-KW"/>
</dbReference>
<dbReference type="GO" id="GO:0052856">
    <property type="term" value="F:NAD(P)HX epimerase activity"/>
    <property type="evidence" value="ECO:0007669"/>
    <property type="project" value="UniProtKB-UniRule"/>
</dbReference>
<dbReference type="GO" id="GO:0000166">
    <property type="term" value="F:nucleotide binding"/>
    <property type="evidence" value="ECO:0007669"/>
    <property type="project" value="UniProtKB-KW"/>
</dbReference>
<dbReference type="FunFam" id="3.40.50.10260:FF:000005">
    <property type="entry name" value="NAD(P)H-hydrate epimerase"/>
    <property type="match status" value="1"/>
</dbReference>
<dbReference type="Gene3D" id="3.40.50.10260">
    <property type="entry name" value="YjeF N-terminal domain"/>
    <property type="match status" value="1"/>
</dbReference>
<dbReference type="HAMAP" id="MF_01966">
    <property type="entry name" value="NADHX_epimerase"/>
    <property type="match status" value="1"/>
</dbReference>
<dbReference type="InterPro" id="IPR004443">
    <property type="entry name" value="YjeF_N_dom"/>
</dbReference>
<dbReference type="InterPro" id="IPR036652">
    <property type="entry name" value="YjeF_N_dom_sf"/>
</dbReference>
<dbReference type="InterPro" id="IPR032976">
    <property type="entry name" value="YJEFN_prot_NAXE-like"/>
</dbReference>
<dbReference type="NCBIfam" id="TIGR00197">
    <property type="entry name" value="yjeF_nterm"/>
    <property type="match status" value="1"/>
</dbReference>
<dbReference type="PANTHER" id="PTHR13232">
    <property type="entry name" value="NAD(P)H-HYDRATE EPIMERASE"/>
    <property type="match status" value="1"/>
</dbReference>
<dbReference type="PANTHER" id="PTHR13232:SF10">
    <property type="entry name" value="NAD(P)H-HYDRATE EPIMERASE"/>
    <property type="match status" value="1"/>
</dbReference>
<dbReference type="Pfam" id="PF03853">
    <property type="entry name" value="YjeF_N"/>
    <property type="match status" value="1"/>
</dbReference>
<dbReference type="SUPFAM" id="SSF64153">
    <property type="entry name" value="YjeF N-terminal domain-like"/>
    <property type="match status" value="1"/>
</dbReference>
<dbReference type="PROSITE" id="PS51385">
    <property type="entry name" value="YJEF_N"/>
    <property type="match status" value="1"/>
</dbReference>
<reference key="1">
    <citation type="journal article" date="2009" name="PLoS Genet.">
        <title>The genome of Nectria haematococca: contribution of supernumerary chromosomes to gene expansion.</title>
        <authorList>
            <person name="Coleman J.J."/>
            <person name="Rounsley S.D."/>
            <person name="Rodriguez-Carres M."/>
            <person name="Kuo A."/>
            <person name="Wasmann C.C."/>
            <person name="Grimwood J."/>
            <person name="Schmutz J."/>
            <person name="Taga M."/>
            <person name="White G.J."/>
            <person name="Zhou S."/>
            <person name="Schwartz D.C."/>
            <person name="Freitag M."/>
            <person name="Ma L.-J."/>
            <person name="Danchin E.G.J."/>
            <person name="Henrissat B."/>
            <person name="Coutinho P.M."/>
            <person name="Nelson D.R."/>
            <person name="Straney D."/>
            <person name="Napoli C.A."/>
            <person name="Barker B.M."/>
            <person name="Gribskov M."/>
            <person name="Rep M."/>
            <person name="Kroken S."/>
            <person name="Molnar I."/>
            <person name="Rensing C."/>
            <person name="Kennell J.C."/>
            <person name="Zamora J."/>
            <person name="Farman M.L."/>
            <person name="Selker E.U."/>
            <person name="Salamov A."/>
            <person name="Shapiro H."/>
            <person name="Pangilinan J."/>
            <person name="Lindquist E."/>
            <person name="Lamers C."/>
            <person name="Grigoriev I.V."/>
            <person name="Geiser D.M."/>
            <person name="Covert S.F."/>
            <person name="Temporini E."/>
            <person name="VanEtten H.D."/>
        </authorList>
    </citation>
    <scope>NUCLEOTIDE SEQUENCE [LARGE SCALE GENOMIC DNA]</scope>
    <source>
        <strain>ATCC MYA-4622 / CBS 123669 / FGSC 9596 / NRRL 45880 / 77-13-4</strain>
    </source>
</reference>
<name>NNRE_FUSV7</name>
<sequence length="236" mass="25471">MAIKTLGAKAAAALDQELMSTGAFSIDQLMELAGLAVSQAVYRLQPLESGRRILVACGPGNNGGDGLVAARHLRHYGYNPTVFYPKRSKNDLYQRLAKQLEDLDVPFVDDFSSAVSSTDHIVDAIFGFSFSGEVREPFPAVIQALQETKLPVTSVDAPSSWDIENGPPESGLGSSFMPTALVSLTAPKPLVNHFRGRHFIGGRFVTPAIASKYGFEVPEYKGIDQVVEVETTGQKL</sequence>